<name>YAJC_ECO57</name>
<accession>P0ADZ9</accession>
<accession>P19677</accession>
<proteinExistence type="inferred from homology"/>
<keyword id="KW-0997">Cell inner membrane</keyword>
<keyword id="KW-1003">Cell membrane</keyword>
<keyword id="KW-0472">Membrane</keyword>
<keyword id="KW-0653">Protein transport</keyword>
<keyword id="KW-1185">Reference proteome</keyword>
<keyword id="KW-0811">Translocation</keyword>
<keyword id="KW-0812">Transmembrane</keyword>
<keyword id="KW-1133">Transmembrane helix</keyword>
<keyword id="KW-0813">Transport</keyword>
<reference key="1">
    <citation type="journal article" date="2001" name="Nature">
        <title>Genome sequence of enterohaemorrhagic Escherichia coli O157:H7.</title>
        <authorList>
            <person name="Perna N.T."/>
            <person name="Plunkett G. III"/>
            <person name="Burland V."/>
            <person name="Mau B."/>
            <person name="Glasner J.D."/>
            <person name="Rose D.J."/>
            <person name="Mayhew G.F."/>
            <person name="Evans P.S."/>
            <person name="Gregor J."/>
            <person name="Kirkpatrick H.A."/>
            <person name="Posfai G."/>
            <person name="Hackett J."/>
            <person name="Klink S."/>
            <person name="Boutin A."/>
            <person name="Shao Y."/>
            <person name="Miller L."/>
            <person name="Grotbeck E.J."/>
            <person name="Davis N.W."/>
            <person name="Lim A."/>
            <person name="Dimalanta E.T."/>
            <person name="Potamousis K."/>
            <person name="Apodaca J."/>
            <person name="Anantharaman T.S."/>
            <person name="Lin J."/>
            <person name="Yen G."/>
            <person name="Schwartz D.C."/>
            <person name="Welch R.A."/>
            <person name="Blattner F.R."/>
        </authorList>
    </citation>
    <scope>NUCLEOTIDE SEQUENCE [LARGE SCALE GENOMIC DNA]</scope>
    <source>
        <strain>O157:H7 / EDL933 / ATCC 700927 / EHEC</strain>
    </source>
</reference>
<reference key="2">
    <citation type="journal article" date="2001" name="DNA Res.">
        <title>Complete genome sequence of enterohemorrhagic Escherichia coli O157:H7 and genomic comparison with a laboratory strain K-12.</title>
        <authorList>
            <person name="Hayashi T."/>
            <person name="Makino K."/>
            <person name="Ohnishi M."/>
            <person name="Kurokawa K."/>
            <person name="Ishii K."/>
            <person name="Yokoyama K."/>
            <person name="Han C.-G."/>
            <person name="Ohtsubo E."/>
            <person name="Nakayama K."/>
            <person name="Murata T."/>
            <person name="Tanaka M."/>
            <person name="Tobe T."/>
            <person name="Iida T."/>
            <person name="Takami H."/>
            <person name="Honda T."/>
            <person name="Sasakawa C."/>
            <person name="Ogasawara N."/>
            <person name="Yasunaga T."/>
            <person name="Kuhara S."/>
            <person name="Shiba T."/>
            <person name="Hattori M."/>
            <person name="Shinagawa H."/>
        </authorList>
    </citation>
    <scope>NUCLEOTIDE SEQUENCE [LARGE SCALE GENOMIC DNA]</scope>
    <source>
        <strain>O157:H7 / Sakai / RIMD 0509952 / EHEC</strain>
    </source>
</reference>
<feature type="chain" id="PRO_0000097014" description="Sec translocon accessory complex subunit YajC">
    <location>
        <begin position="1"/>
        <end position="110"/>
    </location>
</feature>
<feature type="transmembrane region" description="Helical" evidence="2">
    <location>
        <begin position="19"/>
        <end position="39"/>
    </location>
</feature>
<evidence type="ECO:0000250" key="1">
    <source>
        <dbReference type="UniProtKB" id="P0ADZ7"/>
    </source>
</evidence>
<evidence type="ECO:0000255" key="2"/>
<evidence type="ECO:0000305" key="3"/>
<protein>
    <recommendedName>
        <fullName>Sec translocon accessory complex subunit YajC</fullName>
    </recommendedName>
</protein>
<gene>
    <name type="primary">yajC</name>
    <name type="ordered locus">Z0506</name>
    <name type="ordered locus">ECs0458</name>
</gene>
<sequence>MSFFISDAVAATGAPAQGSPMSLILMLVVFGLIFYFMILRPQQKRTKEHKKLMDSIAKGDEVLTNGGLVGRVTKVAENGYIAIALNDTTEVVIKRDFVAAVLPKGTMKAL</sequence>
<comment type="function">
    <text evidence="1">The SecYEG-SecDF-YajC-YidC holo-translocon (HTL) protein secretase/insertase is a supercomplex required for protein secretion, insertion of proteins into membranes, and assembly of membrane protein complexes. While the SecYEG complex is essential for assembly of a number of proteins and complexes, the SecDF-YajC-YidC subcomplex facilitates these functions.</text>
</comment>
<comment type="subunit">
    <text evidence="1">Part of the SecDF-YidC-YajC translocase complex. The SecDF-YidC-YajC translocase forms a supercomplex with SecYEG, called the holo-translocon (HTL).</text>
</comment>
<comment type="subcellular location">
    <subcellularLocation>
        <location evidence="1">Cell inner membrane</location>
        <topology evidence="1">Single-pass membrane protein</topology>
    </subcellularLocation>
</comment>
<comment type="similarity">
    <text evidence="3">Belongs to the YajC family.</text>
</comment>
<dbReference type="EMBL" id="AE005174">
    <property type="protein sequence ID" value="AAG54754.1"/>
    <property type="molecule type" value="Genomic_DNA"/>
</dbReference>
<dbReference type="EMBL" id="BA000007">
    <property type="protein sequence ID" value="BAB33881.1"/>
    <property type="molecule type" value="Genomic_DNA"/>
</dbReference>
<dbReference type="PIR" id="B90686">
    <property type="entry name" value="B90686"/>
</dbReference>
<dbReference type="PIR" id="F85536">
    <property type="entry name" value="F85536"/>
</dbReference>
<dbReference type="RefSeq" id="NP_308485.1">
    <property type="nucleotide sequence ID" value="NC_002695.1"/>
</dbReference>
<dbReference type="RefSeq" id="WP_000007629.1">
    <property type="nucleotide sequence ID" value="NZ_VOAI01000005.1"/>
</dbReference>
<dbReference type="SMR" id="P0ADZ9"/>
<dbReference type="STRING" id="155864.Z0506"/>
<dbReference type="GeneID" id="914560"/>
<dbReference type="GeneID" id="93777053"/>
<dbReference type="KEGG" id="ece:Z0506"/>
<dbReference type="KEGG" id="ecs:ECs_0458"/>
<dbReference type="PATRIC" id="fig|386585.9.peg.558"/>
<dbReference type="eggNOG" id="COG1862">
    <property type="taxonomic scope" value="Bacteria"/>
</dbReference>
<dbReference type="HOGENOM" id="CLU_116157_2_1_6"/>
<dbReference type="OMA" id="GMEMIIM"/>
<dbReference type="Proteomes" id="UP000000558">
    <property type="component" value="Chromosome"/>
</dbReference>
<dbReference type="Proteomes" id="UP000002519">
    <property type="component" value="Chromosome"/>
</dbReference>
<dbReference type="GO" id="GO:0005886">
    <property type="term" value="C:plasma membrane"/>
    <property type="evidence" value="ECO:0007669"/>
    <property type="project" value="UniProtKB-SubCell"/>
</dbReference>
<dbReference type="GO" id="GO:0015031">
    <property type="term" value="P:protein transport"/>
    <property type="evidence" value="ECO:0007669"/>
    <property type="project" value="UniProtKB-KW"/>
</dbReference>
<dbReference type="InterPro" id="IPR003849">
    <property type="entry name" value="Preprotein_translocase_YajC"/>
</dbReference>
<dbReference type="NCBIfam" id="TIGR00739">
    <property type="entry name" value="yajC"/>
    <property type="match status" value="1"/>
</dbReference>
<dbReference type="PANTHER" id="PTHR33909">
    <property type="entry name" value="SEC TRANSLOCON ACCESSORY COMPLEX SUBUNIT YAJC"/>
    <property type="match status" value="1"/>
</dbReference>
<dbReference type="PANTHER" id="PTHR33909:SF1">
    <property type="entry name" value="SEC TRANSLOCON ACCESSORY COMPLEX SUBUNIT YAJC"/>
    <property type="match status" value="1"/>
</dbReference>
<dbReference type="Pfam" id="PF02699">
    <property type="entry name" value="YajC"/>
    <property type="match status" value="1"/>
</dbReference>
<dbReference type="PRINTS" id="PR01853">
    <property type="entry name" value="YAJCTRNLCASE"/>
</dbReference>
<dbReference type="SMART" id="SM01323">
    <property type="entry name" value="YajC"/>
    <property type="match status" value="1"/>
</dbReference>
<organism>
    <name type="scientific">Escherichia coli O157:H7</name>
    <dbReference type="NCBI Taxonomy" id="83334"/>
    <lineage>
        <taxon>Bacteria</taxon>
        <taxon>Pseudomonadati</taxon>
        <taxon>Pseudomonadota</taxon>
        <taxon>Gammaproteobacteria</taxon>
        <taxon>Enterobacterales</taxon>
        <taxon>Enterobacteriaceae</taxon>
        <taxon>Escherichia</taxon>
    </lineage>
</organism>